<sequence>MSWLRTSPLRQSLTRNSGGNGSGGSGNSGNASATVRQRPIDAATDCDPRACYDSFCKHWQQAHEIIQHAGPPTHDDVLGVVSHLDYMVTLLLVELHHCNKVSLPTADAAPPTAPCLEYLLSENLLDKLYEWASTTGRYANAVRLEQLKLYELLVSHSRHQLLCHEPFLRPLLKILASSQGEIFPPDLEKRLVILLNQLCVVLMQNVHLLDLFFFSAQTQVQEQIQNGSLAAPKSGTTTNFIIFSLLIPYVHREGSLGHQARDALLLCMALSQKNSNIGHYIAQYSSICPLLVTGLGGLYSRLPNSIEVSAIDWHRITPDDVAEIPELTLFMNALEFCNAVVQVAHEMIKQQLLDFMYQGFIVPVLGPAILQTLKGKHFQTNIDSQISAMSYLDLILRSITEPGLMRAFVKFLLDTEKFDGERILDALVERLHSPDANLCMVTMALFDTLLGLHCEDLMLELLLKYMLPGKHVPISHRHKINKIDPYLNTTEFFLELTPDVMKRARDLARPKSVHELVDPGAALSSTMLPSLPSPVMSKTIGANWNYYGHYTGDSLYANIQAYLFEAHSRIAQCQRDCGKWANNYRYQKWPRQGQVRATSHALELARQFFSEFGTATPVAVAAVASSELGEKQLDSLQSIGESSGYESFKWRPDDADANDATTTTATSDPDVEHNNSSNHNNSSINSSGRRDLWRVSHSARNEILLTDLDFSEDLFAQGTVNLGPFLNAIWGKLQTFTSNSLYVNLHLTGLITRLAWYPLPLIHSLLLRSDIAITSDTPSFHQVLRMLKQQIDAELPVAENSLEIIDVARSSLIDREFRLINARKVSDNSPLHQQHHQQQQLQHTTNSTHQQQQAQQRSTYATLSAATPMHATPTSAYDPFRRSDNKRRSISASISNIFGRKSTSSTAAANPNPASSGLSQIYAFFTGAASTLVGGINGEVNSRGVAQENPRGNTCETSLSTTPRLDAQATSASSTNSSIGGSTQTLSATHSSSTLHGVESGPQTASFNSEPVSMDSVASMGIIANTSGTERSRDLALCAVLLDEWLKELAAIALEQSVVLVTEQLL</sequence>
<feature type="chain" id="PRO_0000379009" description="FHIP family protein GH13096">
    <location>
        <begin position="1"/>
        <end position="1066"/>
    </location>
</feature>
<feature type="region of interest" description="Disordered" evidence="2">
    <location>
        <begin position="1"/>
        <end position="33"/>
    </location>
</feature>
<feature type="region of interest" description="Disordered" evidence="2">
    <location>
        <begin position="647"/>
        <end position="688"/>
    </location>
</feature>
<feature type="region of interest" description="Disordered" evidence="2">
    <location>
        <begin position="827"/>
        <end position="885"/>
    </location>
</feature>
<feature type="region of interest" description="Disordered" evidence="2">
    <location>
        <begin position="942"/>
        <end position="1010"/>
    </location>
</feature>
<feature type="compositionally biased region" description="Polar residues" evidence="2">
    <location>
        <begin position="1"/>
        <end position="15"/>
    </location>
</feature>
<feature type="compositionally biased region" description="Gly residues" evidence="2">
    <location>
        <begin position="18"/>
        <end position="27"/>
    </location>
</feature>
<feature type="compositionally biased region" description="Low complexity" evidence="2">
    <location>
        <begin position="658"/>
        <end position="687"/>
    </location>
</feature>
<feature type="compositionally biased region" description="Low complexity" evidence="2">
    <location>
        <begin position="836"/>
        <end position="856"/>
    </location>
</feature>
<feature type="compositionally biased region" description="Polar residues" evidence="2">
    <location>
        <begin position="950"/>
        <end position="963"/>
    </location>
</feature>
<feature type="compositionally biased region" description="Low complexity" evidence="2">
    <location>
        <begin position="967"/>
        <end position="996"/>
    </location>
</feature>
<feature type="compositionally biased region" description="Polar residues" evidence="2">
    <location>
        <begin position="1001"/>
        <end position="1010"/>
    </location>
</feature>
<feature type="modified residue" description="Phosphoserine" evidence="1">
    <location>
        <position position="512"/>
    </location>
</feature>
<feature type="modified residue" description="Phosphoserine" evidence="1">
    <location>
        <position position="829"/>
    </location>
</feature>
<name>U518_DROGR</name>
<gene>
    <name type="ORF">GH13096</name>
</gene>
<reference key="1">
    <citation type="journal article" date="2007" name="Nature">
        <title>Evolution of genes and genomes on the Drosophila phylogeny.</title>
        <authorList>
            <consortium name="Drosophila 12 genomes consortium"/>
        </authorList>
    </citation>
    <scope>NUCLEOTIDE SEQUENCE [LARGE SCALE GENOMIC DNA]</scope>
    <source>
        <strain>Tucson 15287-2541.00</strain>
    </source>
</reference>
<organism>
    <name type="scientific">Drosophila grimshawi</name>
    <name type="common">Hawaiian fruit fly</name>
    <name type="synonym">Idiomyia grimshawi</name>
    <dbReference type="NCBI Taxonomy" id="7222"/>
    <lineage>
        <taxon>Eukaryota</taxon>
        <taxon>Metazoa</taxon>
        <taxon>Ecdysozoa</taxon>
        <taxon>Arthropoda</taxon>
        <taxon>Hexapoda</taxon>
        <taxon>Insecta</taxon>
        <taxon>Pterygota</taxon>
        <taxon>Neoptera</taxon>
        <taxon>Endopterygota</taxon>
        <taxon>Diptera</taxon>
        <taxon>Brachycera</taxon>
        <taxon>Muscomorpha</taxon>
        <taxon>Ephydroidea</taxon>
        <taxon>Drosophilidae</taxon>
        <taxon>Drosophila</taxon>
        <taxon>Hawaiian Drosophila</taxon>
    </lineage>
</organism>
<dbReference type="EMBL" id="CH916372">
    <property type="protein sequence ID" value="EDV99313.1"/>
    <property type="molecule type" value="Genomic_DNA"/>
</dbReference>
<dbReference type="SMR" id="B4JQY3"/>
<dbReference type="FunCoup" id="B4JQY3">
    <property type="interactions" value="66"/>
</dbReference>
<dbReference type="STRING" id="7222.B4JQY3"/>
<dbReference type="EnsemblMetazoa" id="FBtr0148510">
    <property type="protein sequence ID" value="FBpp0147002"/>
    <property type="gene ID" value="FBgn0120573"/>
</dbReference>
<dbReference type="EnsemblMetazoa" id="XM_001993352.2">
    <property type="protein sequence ID" value="XP_001993388.1"/>
    <property type="gene ID" value="LOC6566600"/>
</dbReference>
<dbReference type="GeneID" id="6566600"/>
<dbReference type="KEGG" id="dgr:6566600"/>
<dbReference type="eggNOG" id="KOG3695">
    <property type="taxonomic scope" value="Eukaryota"/>
</dbReference>
<dbReference type="HOGENOM" id="CLU_007807_0_0_1"/>
<dbReference type="InParanoid" id="B4JQY3"/>
<dbReference type="OMA" id="RMPSLVQ"/>
<dbReference type="OrthoDB" id="6287422at2759"/>
<dbReference type="PhylomeDB" id="B4JQY3"/>
<dbReference type="Proteomes" id="UP000001070">
    <property type="component" value="Unassembled WGS sequence"/>
</dbReference>
<dbReference type="InterPro" id="IPR019384">
    <property type="entry name" value="FHIP"/>
</dbReference>
<dbReference type="InterPro" id="IPR045669">
    <property type="entry name" value="FHIP_C"/>
</dbReference>
<dbReference type="InterPro" id="IPR045668">
    <property type="entry name" value="FHIP_KELAA_motif"/>
</dbReference>
<dbReference type="PANTHER" id="PTHR21705:SF11">
    <property type="entry name" value="FHIP FAMILY PROTEIN CG3558"/>
    <property type="match status" value="1"/>
</dbReference>
<dbReference type="PANTHER" id="PTHR21705">
    <property type="entry name" value="RAI16 PROTEIN-RELATED"/>
    <property type="match status" value="1"/>
</dbReference>
<dbReference type="Pfam" id="PF19314">
    <property type="entry name" value="DUF5917"/>
    <property type="match status" value="1"/>
</dbReference>
<dbReference type="Pfam" id="PF19311">
    <property type="entry name" value="KELAA"/>
    <property type="match status" value="1"/>
</dbReference>
<dbReference type="Pfam" id="PF10257">
    <property type="entry name" value="RAI16-like"/>
    <property type="match status" value="1"/>
</dbReference>
<evidence type="ECO:0000250" key="1"/>
<evidence type="ECO:0000256" key="2">
    <source>
        <dbReference type="SAM" id="MobiDB-lite"/>
    </source>
</evidence>
<evidence type="ECO:0000305" key="3"/>
<accession>B4JQY3</accession>
<comment type="similarity">
    <text evidence="3">Belongs to the FHIP family.</text>
</comment>
<keyword id="KW-0597">Phosphoprotein</keyword>
<keyword id="KW-1185">Reference proteome</keyword>
<proteinExistence type="inferred from homology"/>
<protein>
    <recommendedName>
        <fullName>FHIP family protein GH13096</fullName>
    </recommendedName>
</protein>